<evidence type="ECO:0000250" key="1">
    <source>
        <dbReference type="UniProtKB" id="Q575S8"/>
    </source>
</evidence>
<evidence type="ECO:0000250" key="2">
    <source>
        <dbReference type="UniProtKB" id="Q8WWM9"/>
    </source>
</evidence>
<evidence type="ECO:0000255" key="3">
    <source>
        <dbReference type="PROSITE-ProRule" id="PRU00238"/>
    </source>
</evidence>
<evidence type="ECO:0000305" key="4"/>
<evidence type="ECO:0000312" key="5">
    <source>
        <dbReference type="EMBL" id="CAG25611.1"/>
    </source>
</evidence>
<accession>Q575S9</accession>
<keyword id="KW-0963">Cytoplasm</keyword>
<keyword id="KW-0349">Heme</keyword>
<keyword id="KW-0408">Iron</keyword>
<keyword id="KW-0479">Metal-binding</keyword>
<keyword id="KW-0539">Nucleus</keyword>
<keyword id="KW-0560">Oxidoreductase</keyword>
<keyword id="KW-1185">Reference proteome</keyword>
<dbReference type="EC" id="1.14.12.-" evidence="2"/>
<dbReference type="EC" id="1.7.-.-" evidence="2"/>
<dbReference type="EC" id="1.11.1.-" evidence="2"/>
<dbReference type="EC" id="1.15.1.1" evidence="2"/>
<dbReference type="EMBL" id="AJ635228">
    <property type="protein sequence ID" value="CAG25611.1"/>
    <property type="status" value="ALT_INIT"/>
    <property type="molecule type" value="mRNA"/>
</dbReference>
<dbReference type="RefSeq" id="NP_001098238.1">
    <property type="nucleotide sequence ID" value="NM_001104768.1"/>
</dbReference>
<dbReference type="FunCoup" id="Q575S9">
    <property type="interactions" value="190"/>
</dbReference>
<dbReference type="STRING" id="8090.ENSORLP00000041976"/>
<dbReference type="GeneID" id="100049377"/>
<dbReference type="KEGG" id="ola:100049377"/>
<dbReference type="CTD" id="554176"/>
<dbReference type="eggNOG" id="KOG3378">
    <property type="taxonomic scope" value="Eukaryota"/>
</dbReference>
<dbReference type="InParanoid" id="Q575S9"/>
<dbReference type="OrthoDB" id="436496at2759"/>
<dbReference type="Proteomes" id="UP000001038">
    <property type="component" value="Unplaced"/>
</dbReference>
<dbReference type="Proteomes" id="UP000265180">
    <property type="component" value="Chromosome 9"/>
</dbReference>
<dbReference type="Proteomes" id="UP000265200">
    <property type="component" value="Chromosome 9"/>
</dbReference>
<dbReference type="GO" id="GO:0005737">
    <property type="term" value="C:cytoplasm"/>
    <property type="evidence" value="ECO:0000250"/>
    <property type="project" value="UniProtKB"/>
</dbReference>
<dbReference type="GO" id="GO:0005634">
    <property type="term" value="C:nucleus"/>
    <property type="evidence" value="ECO:0000250"/>
    <property type="project" value="UniProtKB"/>
</dbReference>
<dbReference type="GO" id="GO:0020037">
    <property type="term" value="F:heme binding"/>
    <property type="evidence" value="ECO:0000318"/>
    <property type="project" value="GO_Central"/>
</dbReference>
<dbReference type="GO" id="GO:0005506">
    <property type="term" value="F:iron ion binding"/>
    <property type="evidence" value="ECO:0007669"/>
    <property type="project" value="InterPro"/>
</dbReference>
<dbReference type="GO" id="GO:0141118">
    <property type="term" value="F:nitric oxide dioxygenase activity, heme protein as donor"/>
    <property type="evidence" value="ECO:0000250"/>
    <property type="project" value="UniProtKB"/>
</dbReference>
<dbReference type="GO" id="GO:0098809">
    <property type="term" value="F:nitrite reductase activity"/>
    <property type="evidence" value="ECO:0000250"/>
    <property type="project" value="UniProtKB"/>
</dbReference>
<dbReference type="GO" id="GO:0016491">
    <property type="term" value="F:oxidoreductase activity"/>
    <property type="evidence" value="ECO:0000318"/>
    <property type="project" value="GO_Central"/>
</dbReference>
<dbReference type="GO" id="GO:0019825">
    <property type="term" value="F:oxygen binding"/>
    <property type="evidence" value="ECO:0007669"/>
    <property type="project" value="InterPro"/>
</dbReference>
<dbReference type="GO" id="GO:0004784">
    <property type="term" value="F:superoxide dismutase activity"/>
    <property type="evidence" value="ECO:0000250"/>
    <property type="project" value="UniProtKB"/>
</dbReference>
<dbReference type="GO" id="GO:0046210">
    <property type="term" value="P:nitric oxide catabolic process"/>
    <property type="evidence" value="ECO:0000250"/>
    <property type="project" value="UniProtKB"/>
</dbReference>
<dbReference type="GO" id="GO:0015671">
    <property type="term" value="P:oxygen transport"/>
    <property type="evidence" value="ECO:0007669"/>
    <property type="project" value="InterPro"/>
</dbReference>
<dbReference type="GO" id="GO:0019430">
    <property type="term" value="P:removal of superoxide radicals"/>
    <property type="evidence" value="ECO:0000250"/>
    <property type="project" value="UniProtKB"/>
</dbReference>
<dbReference type="FunFam" id="1.10.490.10:FF:000005">
    <property type="entry name" value="Cytoglobin"/>
    <property type="match status" value="1"/>
</dbReference>
<dbReference type="Gene3D" id="1.10.490.10">
    <property type="entry name" value="Globins"/>
    <property type="match status" value="1"/>
</dbReference>
<dbReference type="InterPro" id="IPR000971">
    <property type="entry name" value="Globin"/>
</dbReference>
<dbReference type="InterPro" id="IPR009050">
    <property type="entry name" value="Globin-like_sf"/>
</dbReference>
<dbReference type="InterPro" id="IPR012292">
    <property type="entry name" value="Globin/Proto"/>
</dbReference>
<dbReference type="InterPro" id="IPR013314">
    <property type="entry name" value="Globin_lamprey/hagfish"/>
</dbReference>
<dbReference type="PANTHER" id="PTHR46783">
    <property type="entry name" value="CYTOGLOBIN"/>
    <property type="match status" value="1"/>
</dbReference>
<dbReference type="PANTHER" id="PTHR46783:SF1">
    <property type="entry name" value="CYTOGLOBIN-1-RELATED"/>
    <property type="match status" value="1"/>
</dbReference>
<dbReference type="Pfam" id="PF00042">
    <property type="entry name" value="Globin"/>
    <property type="match status" value="1"/>
</dbReference>
<dbReference type="PRINTS" id="PR01906">
    <property type="entry name" value="FISHGLOBIN"/>
</dbReference>
<dbReference type="SUPFAM" id="SSF46458">
    <property type="entry name" value="Globin-like"/>
    <property type="match status" value="1"/>
</dbReference>
<dbReference type="PROSITE" id="PS01033">
    <property type="entry name" value="GLOBIN"/>
    <property type="match status" value="1"/>
</dbReference>
<comment type="function">
    <text evidence="2">Probable multifunctional globin with a hexacoordinated heme iron required for the catalysis of various reactions depending on redox condition of the cell as well as oxygen availability. Has a nitric oxide dioxygenase (NOD) activity and is most probably involved in cell-mediated and oxygen-dependent nitric oxide consumption. Under normoxic conditions functions as a nitric oxide dioxygenase (NOD) but under hypoxic conditions the globin may switch its function to that of a nitrite (NO2) reductase (NiR), generating nitric oxide. Could also have peroxidase and superoxide dismutase activities, detoxifying reactive oxygen species and protecting cells against oxidative stress. Also binds dioxygen with low affinity and could function as an oxygen sensor but has probably no function as a respiratory oxygen carrier.</text>
</comment>
<comment type="catalytic activity">
    <reaction evidence="2">
        <text>Fe(II)-heme b-[protein] + nitric oxide + O2 = Fe(III)-heme b-[protein] + nitrate</text>
        <dbReference type="Rhea" id="RHEA:78091"/>
        <dbReference type="Rhea" id="RHEA-COMP:18975"/>
        <dbReference type="Rhea" id="RHEA-COMP:18976"/>
        <dbReference type="ChEBI" id="CHEBI:15379"/>
        <dbReference type="ChEBI" id="CHEBI:16480"/>
        <dbReference type="ChEBI" id="CHEBI:17632"/>
        <dbReference type="ChEBI" id="CHEBI:55376"/>
        <dbReference type="ChEBI" id="CHEBI:60344"/>
    </reaction>
    <physiologicalReaction direction="left-to-right" evidence="2">
        <dbReference type="Rhea" id="RHEA:78092"/>
    </physiologicalReaction>
</comment>
<comment type="catalytic activity">
    <reaction evidence="2">
        <text>Fe(III)-heme b-[protein] + nitric oxide + H2O = Fe(II)-heme b-[protein] + nitrite + 2 H(+)</text>
        <dbReference type="Rhea" id="RHEA:77711"/>
        <dbReference type="Rhea" id="RHEA-COMP:18975"/>
        <dbReference type="Rhea" id="RHEA-COMP:18976"/>
        <dbReference type="ChEBI" id="CHEBI:15377"/>
        <dbReference type="ChEBI" id="CHEBI:15378"/>
        <dbReference type="ChEBI" id="CHEBI:16301"/>
        <dbReference type="ChEBI" id="CHEBI:16480"/>
        <dbReference type="ChEBI" id="CHEBI:55376"/>
        <dbReference type="ChEBI" id="CHEBI:60344"/>
    </reaction>
    <physiologicalReaction direction="right-to-left" evidence="2">
        <dbReference type="Rhea" id="RHEA:77713"/>
    </physiologicalReaction>
</comment>
<comment type="catalytic activity">
    <reaction evidence="2">
        <text>2 superoxide + 2 H(+) = H2O2 + O2</text>
        <dbReference type="Rhea" id="RHEA:20696"/>
        <dbReference type="ChEBI" id="CHEBI:15378"/>
        <dbReference type="ChEBI" id="CHEBI:15379"/>
        <dbReference type="ChEBI" id="CHEBI:16240"/>
        <dbReference type="ChEBI" id="CHEBI:18421"/>
        <dbReference type="EC" id="1.15.1.1"/>
    </reaction>
    <physiologicalReaction direction="left-to-right" evidence="2">
        <dbReference type="Rhea" id="RHEA:20697"/>
    </physiologicalReaction>
</comment>
<comment type="catalytic activity">
    <reaction evidence="2">
        <text>H2O2 + AH2 = A + 2 H2O</text>
        <dbReference type="Rhea" id="RHEA:30275"/>
        <dbReference type="ChEBI" id="CHEBI:13193"/>
        <dbReference type="ChEBI" id="CHEBI:15377"/>
        <dbReference type="ChEBI" id="CHEBI:16240"/>
        <dbReference type="ChEBI" id="CHEBI:17499"/>
    </reaction>
    <physiologicalReaction direction="left-to-right" evidence="2">
        <dbReference type="Rhea" id="RHEA:30276"/>
    </physiologicalReaction>
</comment>
<comment type="subunit">
    <text evidence="2">Monomeric.</text>
</comment>
<comment type="subcellular location">
    <subcellularLocation>
        <location evidence="2">Cytoplasm</location>
    </subcellularLocation>
    <subcellularLocation>
        <location evidence="2">Nucleus</location>
    </subcellularLocation>
</comment>
<comment type="similarity">
    <text evidence="3">Belongs to the globin family.</text>
</comment>
<comment type="sequence caution" evidence="4">
    <conflict type="erroneous initiation">
        <sequence resource="EMBL-CDS" id="CAG25611"/>
    </conflict>
</comment>
<reference evidence="5" key="1">
    <citation type="journal article" date="2005" name="Biochem. Biophys. Res. Commun.">
        <title>Duplicated cytoglobin genes in teleost fishes.</title>
        <authorList>
            <person name="Fuchs C."/>
            <person name="Luckhardt A."/>
            <person name="Gerlach F."/>
            <person name="Burmester T."/>
            <person name="Hankeln T."/>
        </authorList>
    </citation>
    <scope>NUCLEOTIDE SEQUENCE [MRNA]</scope>
</reference>
<feature type="chain" id="PRO_0000262321" description="Cytoglobin-2">
    <location>
        <begin position="1"/>
        <end position="179"/>
    </location>
</feature>
<feature type="domain" description="Globin" evidence="3">
    <location>
        <begin position="18"/>
        <end position="167"/>
    </location>
</feature>
<feature type="binding site" description="distal binding residue" evidence="2 3">
    <location>
        <position position="81"/>
    </location>
    <ligand>
        <name>heme b</name>
        <dbReference type="ChEBI" id="CHEBI:60344"/>
    </ligand>
    <ligandPart>
        <name>Fe</name>
        <dbReference type="ChEBI" id="CHEBI:18248"/>
    </ligandPart>
</feature>
<feature type="binding site" description="proximal binding residue" evidence="2 3">
    <location>
        <position position="113"/>
    </location>
    <ligand>
        <name>heme b</name>
        <dbReference type="ChEBI" id="CHEBI:60344"/>
    </ligand>
    <ligandPart>
        <name>Fe</name>
        <dbReference type="ChEBI" id="CHEBI:18248"/>
    </ligandPart>
</feature>
<proteinExistence type="evidence at transcript level"/>
<protein>
    <recommendedName>
        <fullName>Cytoglobin-2</fullName>
    </recommendedName>
    <alternativeName>
        <fullName>Nitric oxygen dioxygenase CYGB</fullName>
        <ecNumber evidence="2">1.14.12.-</ecNumber>
    </alternativeName>
    <alternativeName>
        <fullName>Nitrite reductase CYGB</fullName>
        <ecNumber evidence="2">1.7.-.-</ecNumber>
    </alternativeName>
    <alternativeName>
        <fullName>Pseudoperoxidase CYGB</fullName>
        <ecNumber evidence="2">1.11.1.-</ecNumber>
    </alternativeName>
    <alternativeName>
        <fullName>Superoxide dismutase CYGB</fullName>
        <ecNumber evidence="2">1.15.1.1</ecNumber>
    </alternativeName>
</protein>
<gene>
    <name evidence="1" type="primary">cygb2</name>
    <name evidence="5" type="synonym">cygb-2</name>
</gene>
<sequence length="179" mass="20392">MLGVQRGECEDRPERAEPLSDAEMEIIQHTWGHVYKNCEDVGVSVLIRFFVNFPSAKQYFSQFQDMQDPEEMEKSSQLRQHARRVMNAINTVVENLQDPEKVSSVLALVGKAHAVKHKVEPIYFKIXSGVMLSVLSEDFPEFFTAEVQLVWTKLMAAVYWHVTGAYTEVGWLQVSSSAV</sequence>
<name>CYGB2_ORYLA</name>
<organism>
    <name type="scientific">Oryzias latipes</name>
    <name type="common">Japanese rice fish</name>
    <name type="synonym">Japanese killifish</name>
    <dbReference type="NCBI Taxonomy" id="8090"/>
    <lineage>
        <taxon>Eukaryota</taxon>
        <taxon>Metazoa</taxon>
        <taxon>Chordata</taxon>
        <taxon>Craniata</taxon>
        <taxon>Vertebrata</taxon>
        <taxon>Euteleostomi</taxon>
        <taxon>Actinopterygii</taxon>
        <taxon>Neopterygii</taxon>
        <taxon>Teleostei</taxon>
        <taxon>Neoteleostei</taxon>
        <taxon>Acanthomorphata</taxon>
        <taxon>Ovalentaria</taxon>
        <taxon>Atherinomorphae</taxon>
        <taxon>Beloniformes</taxon>
        <taxon>Adrianichthyidae</taxon>
        <taxon>Oryziinae</taxon>
        <taxon>Oryzias</taxon>
    </lineage>
</organism>